<accession>A1S4P1</accession>
<organism>
    <name type="scientific">Shewanella amazonensis (strain ATCC BAA-1098 / SB2B)</name>
    <dbReference type="NCBI Taxonomy" id="326297"/>
    <lineage>
        <taxon>Bacteria</taxon>
        <taxon>Pseudomonadati</taxon>
        <taxon>Pseudomonadota</taxon>
        <taxon>Gammaproteobacteria</taxon>
        <taxon>Alteromonadales</taxon>
        <taxon>Shewanellaceae</taxon>
        <taxon>Shewanella</taxon>
    </lineage>
</organism>
<feature type="chain" id="PRO_1000006172" description="Elongation factor Ts">
    <location>
        <begin position="1"/>
        <end position="283"/>
    </location>
</feature>
<feature type="region of interest" description="Involved in Mg(2+) ion dislocation from EF-Tu" evidence="1">
    <location>
        <begin position="79"/>
        <end position="82"/>
    </location>
</feature>
<evidence type="ECO:0000255" key="1">
    <source>
        <dbReference type="HAMAP-Rule" id="MF_00050"/>
    </source>
</evidence>
<reference key="1">
    <citation type="submission" date="2006-12" db="EMBL/GenBank/DDBJ databases">
        <title>Complete sequence of Shewanella amazonensis SB2B.</title>
        <authorList>
            <consortium name="US DOE Joint Genome Institute"/>
            <person name="Copeland A."/>
            <person name="Lucas S."/>
            <person name="Lapidus A."/>
            <person name="Barry K."/>
            <person name="Detter J.C."/>
            <person name="Glavina del Rio T."/>
            <person name="Hammon N."/>
            <person name="Israni S."/>
            <person name="Dalin E."/>
            <person name="Tice H."/>
            <person name="Pitluck S."/>
            <person name="Munk A.C."/>
            <person name="Brettin T."/>
            <person name="Bruce D."/>
            <person name="Han C."/>
            <person name="Tapia R."/>
            <person name="Gilna P."/>
            <person name="Schmutz J."/>
            <person name="Larimer F."/>
            <person name="Land M."/>
            <person name="Hauser L."/>
            <person name="Kyrpides N."/>
            <person name="Mikhailova N."/>
            <person name="Fredrickson J."/>
            <person name="Richardson P."/>
        </authorList>
    </citation>
    <scope>NUCLEOTIDE SEQUENCE [LARGE SCALE GENOMIC DNA]</scope>
    <source>
        <strain>ATCC BAA-1098 / SB2B</strain>
    </source>
</reference>
<comment type="function">
    <text evidence="1">Associates with the EF-Tu.GDP complex and induces the exchange of GDP to GTP. It remains bound to the aminoacyl-tRNA.EF-Tu.GTP complex up to the GTP hydrolysis stage on the ribosome.</text>
</comment>
<comment type="subcellular location">
    <subcellularLocation>
        <location evidence="1">Cytoplasm</location>
    </subcellularLocation>
</comment>
<comment type="similarity">
    <text evidence="1">Belongs to the EF-Ts family.</text>
</comment>
<protein>
    <recommendedName>
        <fullName evidence="1">Elongation factor Ts</fullName>
        <shortName evidence="1">EF-Ts</shortName>
    </recommendedName>
</protein>
<dbReference type="EMBL" id="CP000507">
    <property type="protein sequence ID" value="ABL99347.1"/>
    <property type="molecule type" value="Genomic_DNA"/>
</dbReference>
<dbReference type="RefSeq" id="WP_011759256.1">
    <property type="nucleotide sequence ID" value="NC_008700.1"/>
</dbReference>
<dbReference type="SMR" id="A1S4P1"/>
<dbReference type="STRING" id="326297.Sama_1140"/>
<dbReference type="KEGG" id="saz:Sama_1140"/>
<dbReference type="eggNOG" id="COG0264">
    <property type="taxonomic scope" value="Bacteria"/>
</dbReference>
<dbReference type="HOGENOM" id="CLU_047155_0_2_6"/>
<dbReference type="OrthoDB" id="9808348at2"/>
<dbReference type="Proteomes" id="UP000009175">
    <property type="component" value="Chromosome"/>
</dbReference>
<dbReference type="GO" id="GO:0005737">
    <property type="term" value="C:cytoplasm"/>
    <property type="evidence" value="ECO:0007669"/>
    <property type="project" value="UniProtKB-SubCell"/>
</dbReference>
<dbReference type="GO" id="GO:0003746">
    <property type="term" value="F:translation elongation factor activity"/>
    <property type="evidence" value="ECO:0007669"/>
    <property type="project" value="UniProtKB-UniRule"/>
</dbReference>
<dbReference type="CDD" id="cd14275">
    <property type="entry name" value="UBA_EF-Ts"/>
    <property type="match status" value="1"/>
</dbReference>
<dbReference type="FunFam" id="1.10.286.20:FF:000001">
    <property type="entry name" value="Elongation factor Ts"/>
    <property type="match status" value="1"/>
</dbReference>
<dbReference type="FunFam" id="1.10.8.10:FF:000001">
    <property type="entry name" value="Elongation factor Ts"/>
    <property type="match status" value="1"/>
</dbReference>
<dbReference type="FunFam" id="3.30.479.20:FF:000001">
    <property type="entry name" value="Elongation factor Ts"/>
    <property type="match status" value="1"/>
</dbReference>
<dbReference type="Gene3D" id="1.10.286.20">
    <property type="match status" value="1"/>
</dbReference>
<dbReference type="Gene3D" id="1.10.8.10">
    <property type="entry name" value="DNA helicase RuvA subunit, C-terminal domain"/>
    <property type="match status" value="1"/>
</dbReference>
<dbReference type="Gene3D" id="3.30.479.20">
    <property type="entry name" value="Elongation factor Ts, dimerisation domain"/>
    <property type="match status" value="2"/>
</dbReference>
<dbReference type="HAMAP" id="MF_00050">
    <property type="entry name" value="EF_Ts"/>
    <property type="match status" value="1"/>
</dbReference>
<dbReference type="InterPro" id="IPR036402">
    <property type="entry name" value="EF-Ts_dimer_sf"/>
</dbReference>
<dbReference type="InterPro" id="IPR001816">
    <property type="entry name" value="Transl_elong_EFTs/EF1B"/>
</dbReference>
<dbReference type="InterPro" id="IPR014039">
    <property type="entry name" value="Transl_elong_EFTs/EF1B_dimer"/>
</dbReference>
<dbReference type="InterPro" id="IPR018101">
    <property type="entry name" value="Transl_elong_Ts_CS"/>
</dbReference>
<dbReference type="InterPro" id="IPR009060">
    <property type="entry name" value="UBA-like_sf"/>
</dbReference>
<dbReference type="NCBIfam" id="TIGR00116">
    <property type="entry name" value="tsf"/>
    <property type="match status" value="1"/>
</dbReference>
<dbReference type="PANTHER" id="PTHR11741">
    <property type="entry name" value="ELONGATION FACTOR TS"/>
    <property type="match status" value="1"/>
</dbReference>
<dbReference type="PANTHER" id="PTHR11741:SF0">
    <property type="entry name" value="ELONGATION FACTOR TS, MITOCHONDRIAL"/>
    <property type="match status" value="1"/>
</dbReference>
<dbReference type="Pfam" id="PF00889">
    <property type="entry name" value="EF_TS"/>
    <property type="match status" value="1"/>
</dbReference>
<dbReference type="SUPFAM" id="SSF54713">
    <property type="entry name" value="Elongation factor Ts (EF-Ts), dimerisation domain"/>
    <property type="match status" value="2"/>
</dbReference>
<dbReference type="SUPFAM" id="SSF46934">
    <property type="entry name" value="UBA-like"/>
    <property type="match status" value="1"/>
</dbReference>
<dbReference type="PROSITE" id="PS01126">
    <property type="entry name" value="EF_TS_1"/>
    <property type="match status" value="1"/>
</dbReference>
<dbReference type="PROSITE" id="PS01127">
    <property type="entry name" value="EF_TS_2"/>
    <property type="match status" value="1"/>
</dbReference>
<gene>
    <name evidence="1" type="primary">tsf</name>
    <name type="ordered locus">Sama_1140</name>
</gene>
<keyword id="KW-0963">Cytoplasm</keyword>
<keyword id="KW-0251">Elongation factor</keyword>
<keyword id="KW-0648">Protein biosynthesis</keyword>
<keyword id="KW-1185">Reference proteome</keyword>
<proteinExistence type="inferred from homology"/>
<sequence>MAISAALVKELRERTGAGMMDCKKALEETNGDIELAIDNMRKSGAAKAAKKAGNIAAEGTILIKQGAGFTALLEVNCQTDFVAKDSNFLAFANQVLEVAAAGKVSVEDLKAQFEEARVALVAKIGENINVRRVEYIDGENVAAYRHGDRIGVVVTGTADEETLKHLAMHVAASKPEYVNPEDVPAEVVAKEREVQVEIAINEGKPKEIAEKMVEGRMKKFTGEVSLTGQPFIMEPKKTVGEFLKEKGATVANFIRLEVGEGIEKKEEDFAAEVAKQIAASQKA</sequence>
<name>EFTS_SHEAM</name>